<name>RNZ_CHLPN</name>
<gene>
    <name evidence="1" type="primary">rnz</name>
    <name type="ordered locus">CPn_0025</name>
    <name type="ordered locus">CP_0751</name>
    <name type="ordered locus">CPj0025</name>
    <name type="ordered locus">CpB0029</name>
</gene>
<sequence length="307" mass="34900">MSSRELIILGCSSQQPTRTRNQGAYLFRWNGEGLLFDPGEGTQRQFIFANIAPTTVNRIFVSHFHGDHCLGLGSMLMRLNLDKVSHPIHCYYPASGKKYFDRLRYGTIYHETIQVVEHPISEEGIVEDFGSFRIEAQRLQHQVDTLGWRITEPDTIKFLPKELESRGIRGLIIQDLIRDQEISIGGSTVYLSDVSYVRKGDSIAIIADTLPCQAAIDLAKNSCMMLCESTYLEQHRHLAESHFHMTAKQAATLAKRAATQKLILTHFSARYLNLDDFYKEASAVFPNVSVAQEYRSYPFPKNPLLNK</sequence>
<evidence type="ECO:0000255" key="1">
    <source>
        <dbReference type="HAMAP-Rule" id="MF_01818"/>
    </source>
</evidence>
<accession>Q9Z9F6</accession>
<comment type="function">
    <text evidence="1">Zinc phosphodiesterase, which displays some tRNA 3'-processing endonuclease activity. Probably involved in tRNA maturation, by removing a 3'-trailer from precursor tRNA.</text>
</comment>
<comment type="catalytic activity">
    <reaction evidence="1">
        <text>Endonucleolytic cleavage of RNA, removing extra 3' nucleotides from tRNA precursor, generating 3' termini of tRNAs. A 3'-hydroxy group is left at the tRNA terminus and a 5'-phosphoryl group is left at the trailer molecule.</text>
        <dbReference type="EC" id="3.1.26.11"/>
    </reaction>
</comment>
<comment type="cofactor">
    <cofactor evidence="1">
        <name>Zn(2+)</name>
        <dbReference type="ChEBI" id="CHEBI:29105"/>
    </cofactor>
    <text evidence="1">Binds 2 Zn(2+) ions.</text>
</comment>
<comment type="subunit">
    <text evidence="1">Homodimer.</text>
</comment>
<comment type="similarity">
    <text evidence="1">Belongs to the RNase Z family.</text>
</comment>
<proteinExistence type="inferred from homology"/>
<keyword id="KW-0255">Endonuclease</keyword>
<keyword id="KW-0378">Hydrolase</keyword>
<keyword id="KW-0479">Metal-binding</keyword>
<keyword id="KW-0540">Nuclease</keyword>
<keyword id="KW-0819">tRNA processing</keyword>
<keyword id="KW-0862">Zinc</keyword>
<dbReference type="EC" id="3.1.26.11" evidence="1"/>
<dbReference type="EMBL" id="AE001363">
    <property type="protein sequence ID" value="AAD18178.1"/>
    <property type="molecule type" value="Genomic_DNA"/>
</dbReference>
<dbReference type="EMBL" id="AE002161">
    <property type="protein sequence ID" value="AAF38556.1"/>
    <property type="molecule type" value="Genomic_DNA"/>
</dbReference>
<dbReference type="EMBL" id="BA000008">
    <property type="protein sequence ID" value="BAA98237.1"/>
    <property type="molecule type" value="Genomic_DNA"/>
</dbReference>
<dbReference type="EMBL" id="AE009440">
    <property type="protein sequence ID" value="AAP97962.1"/>
    <property type="molecule type" value="Genomic_DNA"/>
</dbReference>
<dbReference type="PIR" id="C86494">
    <property type="entry name" value="C86494"/>
</dbReference>
<dbReference type="PIR" id="H72127">
    <property type="entry name" value="H72127"/>
</dbReference>
<dbReference type="RefSeq" id="NP_224233.1">
    <property type="nucleotide sequence ID" value="NC_000922.1"/>
</dbReference>
<dbReference type="RefSeq" id="WP_010882675.1">
    <property type="nucleotide sequence ID" value="NZ_LN847257.1"/>
</dbReference>
<dbReference type="SMR" id="Q9Z9F6"/>
<dbReference type="STRING" id="406984.CPK_ORF00526"/>
<dbReference type="GeneID" id="45050072"/>
<dbReference type="KEGG" id="cpa:CP_0751"/>
<dbReference type="KEGG" id="cpj:atsA"/>
<dbReference type="KEGG" id="cpn:CPn_0025"/>
<dbReference type="KEGG" id="cpt:CpB0029"/>
<dbReference type="PATRIC" id="fig|115713.3.peg.32"/>
<dbReference type="eggNOG" id="COG1234">
    <property type="taxonomic scope" value="Bacteria"/>
</dbReference>
<dbReference type="HOGENOM" id="CLU_031317_2_1_0"/>
<dbReference type="OrthoDB" id="9800940at2"/>
<dbReference type="Proteomes" id="UP000000583">
    <property type="component" value="Chromosome"/>
</dbReference>
<dbReference type="Proteomes" id="UP000000801">
    <property type="component" value="Chromosome"/>
</dbReference>
<dbReference type="GO" id="GO:0042781">
    <property type="term" value="F:3'-tRNA processing endoribonuclease activity"/>
    <property type="evidence" value="ECO:0007669"/>
    <property type="project" value="UniProtKB-UniRule"/>
</dbReference>
<dbReference type="GO" id="GO:0008270">
    <property type="term" value="F:zinc ion binding"/>
    <property type="evidence" value="ECO:0007669"/>
    <property type="project" value="UniProtKB-UniRule"/>
</dbReference>
<dbReference type="CDD" id="cd07717">
    <property type="entry name" value="RNaseZ_ZiPD-like_MBL-fold"/>
    <property type="match status" value="1"/>
</dbReference>
<dbReference type="Gene3D" id="3.60.15.10">
    <property type="entry name" value="Ribonuclease Z/Hydroxyacylglutathione hydrolase-like"/>
    <property type="match status" value="1"/>
</dbReference>
<dbReference type="HAMAP" id="MF_01818">
    <property type="entry name" value="RNase_Z_BN"/>
    <property type="match status" value="1"/>
</dbReference>
<dbReference type="InterPro" id="IPR001279">
    <property type="entry name" value="Metallo-B-lactamas"/>
</dbReference>
<dbReference type="InterPro" id="IPR036866">
    <property type="entry name" value="RibonucZ/Hydroxyglut_hydro"/>
</dbReference>
<dbReference type="InterPro" id="IPR013471">
    <property type="entry name" value="RNase_Z/BN"/>
</dbReference>
<dbReference type="NCBIfam" id="NF000804">
    <property type="entry name" value="PRK00055.2-1"/>
    <property type="match status" value="1"/>
</dbReference>
<dbReference type="PANTHER" id="PTHR46018">
    <property type="entry name" value="ZINC PHOSPHODIESTERASE ELAC PROTEIN 1"/>
    <property type="match status" value="1"/>
</dbReference>
<dbReference type="PANTHER" id="PTHR46018:SF2">
    <property type="entry name" value="ZINC PHOSPHODIESTERASE ELAC PROTEIN 1"/>
    <property type="match status" value="1"/>
</dbReference>
<dbReference type="Pfam" id="PF00753">
    <property type="entry name" value="Lactamase_B"/>
    <property type="match status" value="1"/>
</dbReference>
<dbReference type="SUPFAM" id="SSF56281">
    <property type="entry name" value="Metallo-hydrolase/oxidoreductase"/>
    <property type="match status" value="1"/>
</dbReference>
<feature type="chain" id="PRO_0000155857" description="Ribonuclease Z">
    <location>
        <begin position="1"/>
        <end position="307"/>
    </location>
</feature>
<feature type="active site" description="Proton acceptor" evidence="1">
    <location>
        <position position="67"/>
    </location>
</feature>
<feature type="binding site" evidence="1">
    <location>
        <position position="63"/>
    </location>
    <ligand>
        <name>Zn(2+)</name>
        <dbReference type="ChEBI" id="CHEBI:29105"/>
        <label>1</label>
        <note>catalytic</note>
    </ligand>
</feature>
<feature type="binding site" evidence="1">
    <location>
        <position position="65"/>
    </location>
    <ligand>
        <name>Zn(2+)</name>
        <dbReference type="ChEBI" id="CHEBI:29105"/>
        <label>1</label>
        <note>catalytic</note>
    </ligand>
</feature>
<feature type="binding site" evidence="1">
    <location>
        <position position="67"/>
    </location>
    <ligand>
        <name>Zn(2+)</name>
        <dbReference type="ChEBI" id="CHEBI:29105"/>
        <label>2</label>
        <note>catalytic</note>
    </ligand>
</feature>
<feature type="binding site" evidence="1">
    <location>
        <position position="68"/>
    </location>
    <ligand>
        <name>Zn(2+)</name>
        <dbReference type="ChEBI" id="CHEBI:29105"/>
        <label>2</label>
        <note>catalytic</note>
    </ligand>
</feature>
<feature type="binding site" evidence="1">
    <location>
        <position position="141"/>
    </location>
    <ligand>
        <name>Zn(2+)</name>
        <dbReference type="ChEBI" id="CHEBI:29105"/>
        <label>1</label>
        <note>catalytic</note>
    </ligand>
</feature>
<feature type="binding site" evidence="1">
    <location>
        <position position="208"/>
    </location>
    <ligand>
        <name>Zn(2+)</name>
        <dbReference type="ChEBI" id="CHEBI:29105"/>
        <label>1</label>
        <note>catalytic</note>
    </ligand>
</feature>
<feature type="binding site" evidence="1">
    <location>
        <position position="208"/>
    </location>
    <ligand>
        <name>Zn(2+)</name>
        <dbReference type="ChEBI" id="CHEBI:29105"/>
        <label>2</label>
        <note>catalytic</note>
    </ligand>
</feature>
<feature type="binding site" evidence="1">
    <location>
        <position position="266"/>
    </location>
    <ligand>
        <name>Zn(2+)</name>
        <dbReference type="ChEBI" id="CHEBI:29105"/>
        <label>2</label>
        <note>catalytic</note>
    </ligand>
</feature>
<organism>
    <name type="scientific">Chlamydia pneumoniae</name>
    <name type="common">Chlamydophila pneumoniae</name>
    <dbReference type="NCBI Taxonomy" id="83558"/>
    <lineage>
        <taxon>Bacteria</taxon>
        <taxon>Pseudomonadati</taxon>
        <taxon>Chlamydiota</taxon>
        <taxon>Chlamydiia</taxon>
        <taxon>Chlamydiales</taxon>
        <taxon>Chlamydiaceae</taxon>
        <taxon>Chlamydia/Chlamydophila group</taxon>
        <taxon>Chlamydia</taxon>
    </lineage>
</organism>
<reference key="1">
    <citation type="journal article" date="1999" name="Nat. Genet.">
        <title>Comparative genomes of Chlamydia pneumoniae and C. trachomatis.</title>
        <authorList>
            <person name="Kalman S."/>
            <person name="Mitchell W.P."/>
            <person name="Marathe R."/>
            <person name="Lammel C.J."/>
            <person name="Fan J."/>
            <person name="Hyman R.W."/>
            <person name="Olinger L."/>
            <person name="Grimwood J."/>
            <person name="Davis R.W."/>
            <person name="Stephens R.S."/>
        </authorList>
    </citation>
    <scope>NUCLEOTIDE SEQUENCE [LARGE SCALE GENOMIC DNA]</scope>
    <source>
        <strain>CWL029</strain>
    </source>
</reference>
<reference key="2">
    <citation type="journal article" date="2000" name="Nucleic Acids Res.">
        <title>Genome sequences of Chlamydia trachomatis MoPn and Chlamydia pneumoniae AR39.</title>
        <authorList>
            <person name="Read T.D."/>
            <person name="Brunham R.C."/>
            <person name="Shen C."/>
            <person name="Gill S.R."/>
            <person name="Heidelberg J.F."/>
            <person name="White O."/>
            <person name="Hickey E.K."/>
            <person name="Peterson J.D."/>
            <person name="Utterback T.R."/>
            <person name="Berry K.J."/>
            <person name="Bass S."/>
            <person name="Linher K.D."/>
            <person name="Weidman J.F."/>
            <person name="Khouri H.M."/>
            <person name="Craven B."/>
            <person name="Bowman C."/>
            <person name="Dodson R.J."/>
            <person name="Gwinn M.L."/>
            <person name="Nelson W.C."/>
            <person name="DeBoy R.T."/>
            <person name="Kolonay J.F."/>
            <person name="McClarty G."/>
            <person name="Salzberg S.L."/>
            <person name="Eisen J.A."/>
            <person name="Fraser C.M."/>
        </authorList>
    </citation>
    <scope>NUCLEOTIDE SEQUENCE [LARGE SCALE GENOMIC DNA]</scope>
    <source>
        <strain>AR39</strain>
    </source>
</reference>
<reference key="3">
    <citation type="journal article" date="2000" name="Nucleic Acids Res.">
        <title>Comparison of whole genome sequences of Chlamydia pneumoniae J138 from Japan and CWL029 from USA.</title>
        <authorList>
            <person name="Shirai M."/>
            <person name="Hirakawa H."/>
            <person name="Kimoto M."/>
            <person name="Tabuchi M."/>
            <person name="Kishi F."/>
            <person name="Ouchi K."/>
            <person name="Shiba T."/>
            <person name="Ishii K."/>
            <person name="Hattori M."/>
            <person name="Kuhara S."/>
            <person name="Nakazawa T."/>
        </authorList>
    </citation>
    <scope>NUCLEOTIDE SEQUENCE [LARGE SCALE GENOMIC DNA]</scope>
    <source>
        <strain>J138</strain>
    </source>
</reference>
<reference key="4">
    <citation type="submission" date="2002-05" db="EMBL/GenBank/DDBJ databases">
        <title>The genome sequence of Chlamydia pneumoniae TW183 and comparison with other Chlamydia strains based on whole genome sequence analysis.</title>
        <authorList>
            <person name="Geng M.M."/>
            <person name="Schuhmacher A."/>
            <person name="Muehldorfer I."/>
            <person name="Bensch K.W."/>
            <person name="Schaefer K.P."/>
            <person name="Schneider S."/>
            <person name="Pohl T."/>
            <person name="Essig A."/>
            <person name="Marre R."/>
            <person name="Melchers K."/>
        </authorList>
    </citation>
    <scope>NUCLEOTIDE SEQUENCE [LARGE SCALE GENOMIC DNA]</scope>
    <source>
        <strain>TW-183</strain>
    </source>
</reference>
<protein>
    <recommendedName>
        <fullName evidence="1">Ribonuclease Z</fullName>
        <shortName evidence="1">RNase Z</shortName>
        <ecNumber evidence="1">3.1.26.11</ecNumber>
    </recommendedName>
    <alternativeName>
        <fullName evidence="1">tRNA 3 endonuclease</fullName>
    </alternativeName>
    <alternativeName>
        <fullName evidence="1">tRNase Z</fullName>
    </alternativeName>
</protein>